<evidence type="ECO:0000255" key="1"/>
<evidence type="ECO:0000255" key="2">
    <source>
        <dbReference type="PROSITE-ProRule" id="PRU00214"/>
    </source>
</evidence>
<evidence type="ECO:0000256" key="3">
    <source>
        <dbReference type="SAM" id="MobiDB-lite"/>
    </source>
</evidence>
<evidence type="ECO:0000269" key="4">
    <source>
    </source>
</evidence>
<evidence type="ECO:0000269" key="5">
    <source>
    </source>
</evidence>
<evidence type="ECO:0000305" key="6"/>
<proteinExistence type="evidence at protein level"/>
<feature type="chain" id="PRO_0000035961" description="Ubiquitin-like protein pmt3/smt3">
    <location>
        <begin position="1"/>
        <end position="111"/>
    </location>
</feature>
<feature type="propeptide" id="PRO_0000035962" evidence="1">
    <location>
        <begin position="112"/>
        <end position="117"/>
    </location>
</feature>
<feature type="domain" description="Ubiquitin-like" evidence="2">
    <location>
        <begin position="35"/>
        <end position="115"/>
    </location>
</feature>
<feature type="region of interest" description="Disordered" evidence="3">
    <location>
        <begin position="1"/>
        <end position="37"/>
    </location>
</feature>
<feature type="compositionally biased region" description="Polar residues" evidence="3">
    <location>
        <begin position="17"/>
        <end position="30"/>
    </location>
</feature>
<feature type="cross-link" description="Glycyl lysine isopeptide (Gly-Lys) (interchain with K-? in acceptor proteins)">
    <location>
        <position position="111"/>
    </location>
</feature>
<keyword id="KW-1017">Isopeptide bond</keyword>
<keyword id="KW-0539">Nucleus</keyword>
<keyword id="KW-1185">Reference proteome</keyword>
<keyword id="KW-0833">Ubl conjugation pathway</keyword>
<comment type="function">
    <text evidence="4">Required for chromosome segregation where it may be involved in microtubule assembly. Loss of smt3 leads to an increase in telomere length.</text>
</comment>
<comment type="subunit">
    <text evidence="5">Interacts with rfp1.</text>
</comment>
<comment type="interaction">
    <interactant intactId="EBI-966336">
        <id>O13351</id>
    </interactant>
    <interactant intactId="EBI-966242">
        <id>P36592</id>
        <label>rad22</label>
    </interactant>
    <organismsDiffer>false</organismsDiffer>
    <experiments>4</experiments>
</comment>
<comment type="interaction">
    <interactant intactId="EBI-966336">
        <id>O13351</id>
    </interactant>
    <interactant intactId="EBI-3647269">
        <id>O13826</id>
        <label>rfp1</label>
    </interactant>
    <organismsDiffer>false</organismsDiffer>
    <experiments>5</experiments>
</comment>
<comment type="subcellular location">
    <subcellularLocation>
        <location evidence="4">Nucleus</location>
    </subcellularLocation>
</comment>
<comment type="similarity">
    <text evidence="6">Belongs to the ubiquitin family. SUMO subfamily.</text>
</comment>
<comment type="sequence caution" evidence="6">
    <conflict type="frameshift">
        <sequence resource="EMBL-CDS" id="AAB71541"/>
    </conflict>
</comment>
<organism>
    <name type="scientific">Schizosaccharomyces pombe (strain 972 / ATCC 24843)</name>
    <name type="common">Fission yeast</name>
    <dbReference type="NCBI Taxonomy" id="284812"/>
    <lineage>
        <taxon>Eukaryota</taxon>
        <taxon>Fungi</taxon>
        <taxon>Dikarya</taxon>
        <taxon>Ascomycota</taxon>
        <taxon>Taphrinomycotina</taxon>
        <taxon>Schizosaccharomycetes</taxon>
        <taxon>Schizosaccharomycetales</taxon>
        <taxon>Schizosaccharomycetaceae</taxon>
        <taxon>Schizosaccharomyces</taxon>
    </lineage>
</organism>
<dbReference type="EMBL" id="AB017187">
    <property type="protein sequence ID" value="BAA32595.1"/>
    <property type="molecule type" value="Genomic_DNA"/>
</dbReference>
<dbReference type="EMBL" id="CU329671">
    <property type="protein sequence ID" value="CAB44758.1"/>
    <property type="molecule type" value="Genomic_DNA"/>
</dbReference>
<dbReference type="EMBL" id="AF019235">
    <property type="protein sequence ID" value="AAB71541.1"/>
    <property type="status" value="ALT_FRAME"/>
    <property type="molecule type" value="mRNA"/>
</dbReference>
<dbReference type="PIR" id="T40313">
    <property type="entry name" value="T40313"/>
</dbReference>
<dbReference type="PIR" id="T43537">
    <property type="entry name" value="T43537"/>
</dbReference>
<dbReference type="RefSeq" id="NP_596035.1">
    <property type="nucleotide sequence ID" value="NM_001021945.2"/>
</dbReference>
<dbReference type="SMR" id="O13351"/>
<dbReference type="BioGRID" id="277443">
    <property type="interactions" value="193"/>
</dbReference>
<dbReference type="FunCoup" id="O13351">
    <property type="interactions" value="884"/>
</dbReference>
<dbReference type="IntAct" id="O13351">
    <property type="interactions" value="10"/>
</dbReference>
<dbReference type="MINT" id="O13351"/>
<dbReference type="STRING" id="284812.O13351"/>
<dbReference type="iPTMnet" id="O13351"/>
<dbReference type="PaxDb" id="4896-SPBC365.06.1"/>
<dbReference type="EnsemblFungi" id="SPBC365.06.1">
    <property type="protein sequence ID" value="SPBC365.06.1:pep"/>
    <property type="gene ID" value="SPBC365.06"/>
</dbReference>
<dbReference type="PomBase" id="SPBC365.06">
    <property type="gene designation" value="pmt3"/>
</dbReference>
<dbReference type="VEuPathDB" id="FungiDB:SPBC365.06"/>
<dbReference type="eggNOG" id="KOG1769">
    <property type="taxonomic scope" value="Eukaryota"/>
</dbReference>
<dbReference type="HOGENOM" id="CLU_148322_0_1_1"/>
<dbReference type="InParanoid" id="O13351"/>
<dbReference type="OMA" id="MKIYCAR"/>
<dbReference type="PhylomeDB" id="O13351"/>
<dbReference type="Reactome" id="R-SPO-3065676">
    <property type="pathway name" value="SUMO is conjugated to E1 (UBA2:SAE1)"/>
</dbReference>
<dbReference type="Reactome" id="R-SPO-3065678">
    <property type="pathway name" value="SUMO is transferred from E1 to E2 (UBE2I, UBC9)"/>
</dbReference>
<dbReference type="Reactome" id="R-SPO-3065679">
    <property type="pathway name" value="SUMO is proteolytically processed"/>
</dbReference>
<dbReference type="Reactome" id="R-SPO-3108214">
    <property type="pathway name" value="SUMOylation of DNA damage response and repair proteins"/>
</dbReference>
<dbReference type="Reactome" id="R-SPO-3232118">
    <property type="pathway name" value="SUMOylation of transcription factors"/>
</dbReference>
<dbReference type="Reactome" id="R-SPO-3899300">
    <property type="pathway name" value="SUMOylation of transcription cofactors"/>
</dbReference>
<dbReference type="Reactome" id="R-SPO-4085377">
    <property type="pathway name" value="SUMOylation of SUMOylation proteins"/>
</dbReference>
<dbReference type="Reactome" id="R-SPO-4551638">
    <property type="pathway name" value="SUMOylation of chromatin organization proteins"/>
</dbReference>
<dbReference type="Reactome" id="R-SPO-4570464">
    <property type="pathway name" value="SUMOylation of RNA binding proteins"/>
</dbReference>
<dbReference type="Reactome" id="R-SPO-4615885">
    <property type="pathway name" value="SUMOylation of DNA replication proteins"/>
</dbReference>
<dbReference type="Reactome" id="R-SPO-5693565">
    <property type="pathway name" value="Recruitment and ATM-mediated phosphorylation of repair and signaling proteins at DNA double strand breaks"/>
</dbReference>
<dbReference type="Reactome" id="R-SPO-5696395">
    <property type="pathway name" value="Formation of Incision Complex in GG-NER"/>
</dbReference>
<dbReference type="Reactome" id="R-SPO-9615933">
    <property type="pathway name" value="Postmitotic nuclear pore complex (NPC) reformation"/>
</dbReference>
<dbReference type="Reactome" id="R-SPO-9793242">
    <property type="pathway name" value="SUMOylation of nuclear envelope proteins"/>
</dbReference>
<dbReference type="CD-CODE" id="576F0A76">
    <property type="entry name" value="Centrosome"/>
</dbReference>
<dbReference type="PRO" id="PR:O13351"/>
<dbReference type="Proteomes" id="UP000002485">
    <property type="component" value="Chromosome II"/>
</dbReference>
<dbReference type="GO" id="GO:0030998">
    <property type="term" value="C:linear element"/>
    <property type="evidence" value="ECO:0000314"/>
    <property type="project" value="PomBase"/>
</dbReference>
<dbReference type="GO" id="GO:0044732">
    <property type="term" value="C:mitotic spindle pole body"/>
    <property type="evidence" value="ECO:0000314"/>
    <property type="project" value="PomBase"/>
</dbReference>
<dbReference type="GO" id="GO:0005634">
    <property type="term" value="C:nucleus"/>
    <property type="evidence" value="ECO:0000314"/>
    <property type="project" value="PomBase"/>
</dbReference>
<dbReference type="GO" id="GO:0005940">
    <property type="term" value="C:septin ring"/>
    <property type="evidence" value="ECO:0000318"/>
    <property type="project" value="GO_Central"/>
</dbReference>
<dbReference type="GO" id="GO:0031386">
    <property type="term" value="F:protein tag activity"/>
    <property type="evidence" value="ECO:0000314"/>
    <property type="project" value="PomBase"/>
</dbReference>
<dbReference type="GO" id="GO:0044389">
    <property type="term" value="F:ubiquitin-like protein ligase binding"/>
    <property type="evidence" value="ECO:0000318"/>
    <property type="project" value="GO_Central"/>
</dbReference>
<dbReference type="GO" id="GO:1990426">
    <property type="term" value="P:mitotic recombination-dependent replication fork processing"/>
    <property type="evidence" value="ECO:0000315"/>
    <property type="project" value="PomBase"/>
</dbReference>
<dbReference type="GO" id="GO:0016925">
    <property type="term" value="P:protein sumoylation"/>
    <property type="evidence" value="ECO:0000318"/>
    <property type="project" value="GO_Central"/>
</dbReference>
<dbReference type="GO" id="GO:0120290">
    <property type="term" value="P:stalled replication fork localization to nuclear periphery"/>
    <property type="evidence" value="ECO:0000315"/>
    <property type="project" value="PomBase"/>
</dbReference>
<dbReference type="GO" id="GO:0000723">
    <property type="term" value="P:telomere maintenance"/>
    <property type="evidence" value="ECO:0000315"/>
    <property type="project" value="PomBase"/>
</dbReference>
<dbReference type="CDD" id="cd16116">
    <property type="entry name" value="Ubl_Smt3_like"/>
    <property type="match status" value="1"/>
</dbReference>
<dbReference type="FunFam" id="3.10.20.90:FF:000208">
    <property type="entry name" value="Small ubiquitin-related modifier"/>
    <property type="match status" value="1"/>
</dbReference>
<dbReference type="Gene3D" id="3.10.20.90">
    <property type="entry name" value="Phosphatidylinositol 3-kinase Catalytic Subunit, Chain A, domain 1"/>
    <property type="match status" value="1"/>
</dbReference>
<dbReference type="InterPro" id="IPR022617">
    <property type="entry name" value="Rad60/SUMO-like_dom"/>
</dbReference>
<dbReference type="InterPro" id="IPR000626">
    <property type="entry name" value="Ubiquitin-like_dom"/>
</dbReference>
<dbReference type="InterPro" id="IPR029071">
    <property type="entry name" value="Ubiquitin-like_domsf"/>
</dbReference>
<dbReference type="PANTHER" id="PTHR10562">
    <property type="entry name" value="SMALL UBIQUITIN-RELATED MODIFIER"/>
    <property type="match status" value="1"/>
</dbReference>
<dbReference type="Pfam" id="PF11976">
    <property type="entry name" value="Rad60-SLD"/>
    <property type="match status" value="1"/>
</dbReference>
<dbReference type="SMART" id="SM00213">
    <property type="entry name" value="UBQ"/>
    <property type="match status" value="1"/>
</dbReference>
<dbReference type="SUPFAM" id="SSF54236">
    <property type="entry name" value="Ubiquitin-like"/>
    <property type="match status" value="1"/>
</dbReference>
<dbReference type="PROSITE" id="PS50053">
    <property type="entry name" value="UBIQUITIN_2"/>
    <property type="match status" value="1"/>
</dbReference>
<sequence>MSESPSANISDADKSAITPTTGDTSQQDVKPSTEHINLKVVGQDNNEVFFKIKKTTEFSKLMKIYCARQGKSMNSLRFLVDGERIRPDQTPAELDMEDGDQIEAVLEQLGGCTHLCL</sequence>
<accession>O13351</accession>
<accession>O74186</accession>
<gene>
    <name type="primary">pmt3</name>
    <name type="synonym">smt3</name>
    <name type="synonym">ubl2</name>
    <name type="ORF">SPBC365.06</name>
</gene>
<name>PMT3_SCHPO</name>
<protein>
    <recommendedName>
        <fullName>Ubiquitin-like protein pmt3/smt3</fullName>
    </recommendedName>
</protein>
<reference key="1">
    <citation type="journal article" date="1999" name="Mol. Cell. Biol.">
        <title>Characterization of a fission yeast SUMO-1 homologue, pmt3p, required for multiple nuclear events, including the control of telomere length and chromosome segregation.</title>
        <authorList>
            <person name="Tanaka K."/>
            <person name="Nishide J."/>
            <person name="Okazaki K."/>
            <person name="Kato H."/>
            <person name="Niwa O."/>
            <person name="Nakagawa T."/>
            <person name="Matsuda H."/>
            <person name="Kawamukai M."/>
            <person name="Murakami Y."/>
        </authorList>
    </citation>
    <scope>NUCLEOTIDE SEQUENCE [GENOMIC DNA]</scope>
    <scope>FUNCTION</scope>
    <scope>SUBCELLULAR LOCATION</scope>
</reference>
<reference key="2">
    <citation type="journal article" date="2002" name="Nature">
        <title>The genome sequence of Schizosaccharomyces pombe.</title>
        <authorList>
            <person name="Wood V."/>
            <person name="Gwilliam R."/>
            <person name="Rajandream M.A."/>
            <person name="Lyne M.H."/>
            <person name="Lyne R."/>
            <person name="Stewart A."/>
            <person name="Sgouros J.G."/>
            <person name="Peat N."/>
            <person name="Hayles J."/>
            <person name="Baker S.G."/>
            <person name="Basham D."/>
            <person name="Bowman S."/>
            <person name="Brooks K."/>
            <person name="Brown D."/>
            <person name="Brown S."/>
            <person name="Chillingworth T."/>
            <person name="Churcher C.M."/>
            <person name="Collins M."/>
            <person name="Connor R."/>
            <person name="Cronin A."/>
            <person name="Davis P."/>
            <person name="Feltwell T."/>
            <person name="Fraser A."/>
            <person name="Gentles S."/>
            <person name="Goble A."/>
            <person name="Hamlin N."/>
            <person name="Harris D.E."/>
            <person name="Hidalgo J."/>
            <person name="Hodgson G."/>
            <person name="Holroyd S."/>
            <person name="Hornsby T."/>
            <person name="Howarth S."/>
            <person name="Huckle E.J."/>
            <person name="Hunt S."/>
            <person name="Jagels K."/>
            <person name="James K.D."/>
            <person name="Jones L."/>
            <person name="Jones M."/>
            <person name="Leather S."/>
            <person name="McDonald S."/>
            <person name="McLean J."/>
            <person name="Mooney P."/>
            <person name="Moule S."/>
            <person name="Mungall K.L."/>
            <person name="Murphy L.D."/>
            <person name="Niblett D."/>
            <person name="Odell C."/>
            <person name="Oliver K."/>
            <person name="O'Neil S."/>
            <person name="Pearson D."/>
            <person name="Quail M.A."/>
            <person name="Rabbinowitsch E."/>
            <person name="Rutherford K.M."/>
            <person name="Rutter S."/>
            <person name="Saunders D."/>
            <person name="Seeger K."/>
            <person name="Sharp S."/>
            <person name="Skelton J."/>
            <person name="Simmonds M.N."/>
            <person name="Squares R."/>
            <person name="Squares S."/>
            <person name="Stevens K."/>
            <person name="Taylor K."/>
            <person name="Taylor R.G."/>
            <person name="Tivey A."/>
            <person name="Walsh S.V."/>
            <person name="Warren T."/>
            <person name="Whitehead S."/>
            <person name="Woodward J.R."/>
            <person name="Volckaert G."/>
            <person name="Aert R."/>
            <person name="Robben J."/>
            <person name="Grymonprez B."/>
            <person name="Weltjens I."/>
            <person name="Vanstreels E."/>
            <person name="Rieger M."/>
            <person name="Schaefer M."/>
            <person name="Mueller-Auer S."/>
            <person name="Gabel C."/>
            <person name="Fuchs M."/>
            <person name="Duesterhoeft A."/>
            <person name="Fritzc C."/>
            <person name="Holzer E."/>
            <person name="Moestl D."/>
            <person name="Hilbert H."/>
            <person name="Borzym K."/>
            <person name="Langer I."/>
            <person name="Beck A."/>
            <person name="Lehrach H."/>
            <person name="Reinhardt R."/>
            <person name="Pohl T.M."/>
            <person name="Eger P."/>
            <person name="Zimmermann W."/>
            <person name="Wedler H."/>
            <person name="Wambutt R."/>
            <person name="Purnelle B."/>
            <person name="Goffeau A."/>
            <person name="Cadieu E."/>
            <person name="Dreano S."/>
            <person name="Gloux S."/>
            <person name="Lelaure V."/>
            <person name="Mottier S."/>
            <person name="Galibert F."/>
            <person name="Aves S.J."/>
            <person name="Xiang Z."/>
            <person name="Hunt C."/>
            <person name="Moore K."/>
            <person name="Hurst S.M."/>
            <person name="Lucas M."/>
            <person name="Rochet M."/>
            <person name="Gaillardin C."/>
            <person name="Tallada V.A."/>
            <person name="Garzon A."/>
            <person name="Thode G."/>
            <person name="Daga R.R."/>
            <person name="Cruzado L."/>
            <person name="Jimenez J."/>
            <person name="Sanchez M."/>
            <person name="del Rey F."/>
            <person name="Benito J."/>
            <person name="Dominguez A."/>
            <person name="Revuelta J.L."/>
            <person name="Moreno S."/>
            <person name="Armstrong J."/>
            <person name="Forsburg S.L."/>
            <person name="Cerutti L."/>
            <person name="Lowe T."/>
            <person name="McCombie W.R."/>
            <person name="Paulsen I."/>
            <person name="Potashkin J."/>
            <person name="Shpakovski G.V."/>
            <person name="Ussery D."/>
            <person name="Barrell B.G."/>
            <person name="Nurse P."/>
        </authorList>
    </citation>
    <scope>NUCLEOTIDE SEQUENCE [LARGE SCALE GENOMIC DNA]</scope>
    <source>
        <strain>972 / ATCC 24843</strain>
    </source>
</reference>
<reference key="3">
    <citation type="submission" date="1997-08" db="EMBL/GenBank/DDBJ databases">
        <title>Ubiquitin-like protein (Schizosaccharomyces pombe).</title>
        <authorList>
            <person name="Pelletier M.F."/>
            <person name="Dignard D."/>
        </authorList>
    </citation>
    <scope>NUCLEOTIDE SEQUENCE [GENOMIC DNA] OF 25-117</scope>
    <source>
        <strain>358</strain>
    </source>
</reference>
<reference key="4">
    <citation type="journal article" date="2007" name="J. Biol. Chem.">
        <title>Fission yeast Rnf4 homologs are required for DNA repair.</title>
        <authorList>
            <person name="Kosoy A."/>
            <person name="Calonge T.M."/>
            <person name="Outwin E.A."/>
            <person name="O'Connell M.J."/>
        </authorList>
    </citation>
    <scope>INTERACTION WITH RFP1</scope>
</reference>